<reference key="1">
    <citation type="journal article" date="1998" name="Mol. Biol. Evol.">
        <title>Evolutionary conservation of the immediate-early gene ZENK.</title>
        <authorList>
            <person name="Long K.D."/>
            <person name="Salbaum J.M."/>
        </authorList>
    </citation>
    <scope>NUCLEOTIDE SEQUENCE [GENOMIC DNA]</scope>
</reference>
<keyword id="KW-0010">Activator</keyword>
<keyword id="KW-0090">Biological rhythms</keyword>
<keyword id="KW-0963">Cytoplasm</keyword>
<keyword id="KW-0238">DNA-binding</keyword>
<keyword id="KW-0479">Metal-binding</keyword>
<keyword id="KW-0539">Nucleus</keyword>
<keyword id="KW-1185">Reference proteome</keyword>
<keyword id="KW-0677">Repeat</keyword>
<keyword id="KW-0804">Transcription</keyword>
<keyword id="KW-0805">Transcription regulation</keyword>
<keyword id="KW-0862">Zinc</keyword>
<keyword id="KW-0863">Zinc-finger</keyword>
<sequence length="59" mass="7030">CDRRFSRSDELTRHIRIHTGQKPFQCRICMRNFSRSDHLTTHIRTHTGEKPFACDICGR</sequence>
<gene>
    <name type="primary">EGR1</name>
    <name evidence="4" type="synonym">ZENK</name>
</gene>
<feature type="chain" id="PRO_0000047115" description="Early growth response protein 1">
    <location>
        <begin position="1" status="less than"/>
        <end position="59" status="greater than"/>
    </location>
</feature>
<feature type="zinc finger region" description="C2H2-type 1" evidence="3">
    <location>
        <begin position="1" status="less than"/>
        <end position="18"/>
    </location>
</feature>
<feature type="zinc finger region" description="C2H2-type 2" evidence="3">
    <location>
        <begin position="24"/>
        <end position="46"/>
    </location>
</feature>
<feature type="zinc finger region" description="C2H2-type 3" evidence="3">
    <location>
        <begin position="52"/>
        <end position="59" status="greater than"/>
    </location>
</feature>
<feature type="site" description="Interaction with DNA" evidence="1">
    <location>
        <position position="3"/>
    </location>
</feature>
<feature type="site" description="Interaction with DNA" evidence="1">
    <location>
        <position position="7"/>
    </location>
</feature>
<feature type="site" description="Interaction with DNA" evidence="2">
    <location>
        <position position="13"/>
    </location>
</feature>
<feature type="site" description="Interaction with DNA" evidence="1">
    <location>
        <position position="31"/>
    </location>
</feature>
<feature type="site" description="Interaction with DNA" evidence="2">
    <location>
        <position position="35"/>
    </location>
</feature>
<feature type="site" description="Interaction with DNA" evidence="2">
    <location>
        <position position="59"/>
    </location>
</feature>
<feature type="non-terminal residue">
    <location>
        <position position="1"/>
    </location>
</feature>
<feature type="non-terminal residue">
    <location>
        <position position="59"/>
    </location>
</feature>
<comment type="function">
    <text evidence="1 2">Transcriptional regulator. Recognizes and binds to the DNA sequence 5'-GCG(T/G)GGGCG-3'(EGR-site) in the promoter region of target genes (By similarity). Binds double-stranded target DNA, irrespective of the cytosine methylation status (By similarity). Regulates the transcription of numerous target genes, and thereby plays an important role in regulating the response to growth factors, DNA damage, and ischemia. Plays a role in the regulation of cell survival, proliferation and cell death. Mediates responses to ischemia and hypoxia; regulates the expression of proteins that are involved in inflammatory processes (By similarity). Plays a role in regulating the expression of circadian clock genes (By similarity).</text>
</comment>
<comment type="subcellular location">
    <subcellularLocation>
        <location evidence="2">Nucleus</location>
    </subcellularLocation>
    <subcellularLocation>
        <location evidence="2">Cytoplasm</location>
    </subcellularLocation>
</comment>
<comment type="domain">
    <text evidence="2">Binds to DNA motifs with the sequence 5'-GCG(T/G)GGGCG-3' via its C2H2-type zinc fingers. The first, most N-terminal zinc finger binds to the 3'-GCG motif, the middle zinc finger interacts with the central TGG motif, and the C-terminal zinc finger binds to the 5'-GCG motif. Binds double-stranded target DNA, irrespective of the cytosine methylation status. Has reduced affinity for target DNA where the cytosines have been oxidized to 5-hydroxymethylcytosine. Does not bind target DNA where the cytosines have been oxidized to 5-formylcytosine or 5-carboxylcytosine.</text>
</comment>
<comment type="similarity">
    <text evidence="5">Belongs to the EGR C2H2-type zinc-finger protein family.</text>
</comment>
<evidence type="ECO:0000250" key="1">
    <source>
        <dbReference type="UniProtKB" id="P08046"/>
    </source>
</evidence>
<evidence type="ECO:0000250" key="2">
    <source>
        <dbReference type="UniProtKB" id="P18146"/>
    </source>
</evidence>
<evidence type="ECO:0000255" key="3">
    <source>
        <dbReference type="PROSITE-ProRule" id="PRU00042"/>
    </source>
</evidence>
<evidence type="ECO:0000303" key="4">
    <source>
    </source>
</evidence>
<evidence type="ECO:0000305" key="5"/>
<proteinExistence type="inferred from homology"/>
<organism>
    <name type="scientific">Serinus canaria</name>
    <name type="common">Island canary</name>
    <name type="synonym">Fringilla canaria</name>
    <dbReference type="NCBI Taxonomy" id="9135"/>
    <lineage>
        <taxon>Eukaryota</taxon>
        <taxon>Metazoa</taxon>
        <taxon>Chordata</taxon>
        <taxon>Craniata</taxon>
        <taxon>Vertebrata</taxon>
        <taxon>Euteleostomi</taxon>
        <taxon>Archelosauria</taxon>
        <taxon>Archosauria</taxon>
        <taxon>Dinosauria</taxon>
        <taxon>Saurischia</taxon>
        <taxon>Theropoda</taxon>
        <taxon>Coelurosauria</taxon>
        <taxon>Aves</taxon>
        <taxon>Neognathae</taxon>
        <taxon>Neoaves</taxon>
        <taxon>Telluraves</taxon>
        <taxon>Australaves</taxon>
        <taxon>Passeriformes</taxon>
        <taxon>Passeroidea</taxon>
        <taxon>Fringillidae</taxon>
        <taxon>Carduelinae</taxon>
        <taxon>Serinus</taxon>
    </lineage>
</organism>
<accession>O73694</accession>
<protein>
    <recommendedName>
        <fullName>Early growth response protein 1</fullName>
        <shortName>EGR-1</shortName>
    </recommendedName>
    <alternativeName>
        <fullName evidence="4">Zinc finger protein ZENK</fullName>
    </alternativeName>
</protein>
<name>EGR1_SERCA</name>
<dbReference type="EMBL" id="AF026085">
    <property type="protein sequence ID" value="AAC12269.1"/>
    <property type="molecule type" value="Genomic_DNA"/>
</dbReference>
<dbReference type="SMR" id="O73694"/>
<dbReference type="Proteomes" id="UP000694409">
    <property type="component" value="Unplaced"/>
</dbReference>
<dbReference type="GO" id="GO:0005737">
    <property type="term" value="C:cytoplasm"/>
    <property type="evidence" value="ECO:0000250"/>
    <property type="project" value="UniProtKB"/>
</dbReference>
<dbReference type="GO" id="GO:0005654">
    <property type="term" value="C:nucleoplasm"/>
    <property type="evidence" value="ECO:0000247"/>
    <property type="project" value="AgBase"/>
</dbReference>
<dbReference type="GO" id="GO:0005634">
    <property type="term" value="C:nucleus"/>
    <property type="evidence" value="ECO:0000250"/>
    <property type="project" value="UniProtKB"/>
</dbReference>
<dbReference type="GO" id="GO:0003677">
    <property type="term" value="F:DNA binding"/>
    <property type="evidence" value="ECO:0000247"/>
    <property type="project" value="AgBase"/>
</dbReference>
<dbReference type="GO" id="GO:0003700">
    <property type="term" value="F:DNA-binding transcription factor activity"/>
    <property type="evidence" value="ECO:0000247"/>
    <property type="project" value="AgBase"/>
</dbReference>
<dbReference type="GO" id="GO:0000981">
    <property type="term" value="F:DNA-binding transcription factor activity, RNA polymerase II-specific"/>
    <property type="evidence" value="ECO:0007669"/>
    <property type="project" value="TreeGrafter"/>
</dbReference>
<dbReference type="GO" id="GO:0010385">
    <property type="term" value="F:double-stranded methylated DNA binding"/>
    <property type="evidence" value="ECO:0000250"/>
    <property type="project" value="UniProtKB"/>
</dbReference>
<dbReference type="GO" id="GO:0044729">
    <property type="term" value="F:hemi-methylated DNA-binding"/>
    <property type="evidence" value="ECO:0000250"/>
    <property type="project" value="UniProtKB"/>
</dbReference>
<dbReference type="GO" id="GO:0035035">
    <property type="term" value="F:histone acetyltransferase binding"/>
    <property type="evidence" value="ECO:0000247"/>
    <property type="project" value="AgBase"/>
</dbReference>
<dbReference type="GO" id="GO:1990841">
    <property type="term" value="F:promoter-specific chromatin binding"/>
    <property type="evidence" value="ECO:0000250"/>
    <property type="project" value="UniProtKB"/>
</dbReference>
<dbReference type="GO" id="GO:0000978">
    <property type="term" value="F:RNA polymerase II cis-regulatory region sequence-specific DNA binding"/>
    <property type="evidence" value="ECO:0007669"/>
    <property type="project" value="TreeGrafter"/>
</dbReference>
<dbReference type="GO" id="GO:0000977">
    <property type="term" value="F:RNA polymerase II transcription regulatory region sequence-specific DNA binding"/>
    <property type="evidence" value="ECO:0000247"/>
    <property type="project" value="AgBase"/>
</dbReference>
<dbReference type="GO" id="GO:0043565">
    <property type="term" value="F:sequence-specific DNA binding"/>
    <property type="evidence" value="ECO:0000247"/>
    <property type="project" value="AgBase"/>
</dbReference>
<dbReference type="GO" id="GO:0000976">
    <property type="term" value="F:transcription cis-regulatory region binding"/>
    <property type="evidence" value="ECO:0000247"/>
    <property type="project" value="AgBase"/>
</dbReference>
<dbReference type="GO" id="GO:0008270">
    <property type="term" value="F:zinc ion binding"/>
    <property type="evidence" value="ECO:0000250"/>
    <property type="project" value="UniProtKB"/>
</dbReference>
<dbReference type="GO" id="GO:0098759">
    <property type="term" value="P:cellular response to interleukin-8"/>
    <property type="evidence" value="ECO:0000250"/>
    <property type="project" value="AgBase"/>
</dbReference>
<dbReference type="GO" id="GO:0032922">
    <property type="term" value="P:circadian regulation of gene expression"/>
    <property type="evidence" value="ECO:0000250"/>
    <property type="project" value="UniProtKB"/>
</dbReference>
<dbReference type="GO" id="GO:0070498">
    <property type="term" value="P:interleukin-1-mediated signaling pathway"/>
    <property type="evidence" value="ECO:0000247"/>
    <property type="project" value="AgBase"/>
</dbReference>
<dbReference type="GO" id="GO:0045893">
    <property type="term" value="P:positive regulation of DNA-templated transcription"/>
    <property type="evidence" value="ECO:0000250"/>
    <property type="project" value="UniProtKB"/>
</dbReference>
<dbReference type="GO" id="GO:0045944">
    <property type="term" value="P:positive regulation of transcription by RNA polymerase II"/>
    <property type="evidence" value="ECO:0000250"/>
    <property type="project" value="UniProtKB"/>
</dbReference>
<dbReference type="GO" id="GO:0033233">
    <property type="term" value="P:regulation of protein sumoylation"/>
    <property type="evidence" value="ECO:0000247"/>
    <property type="project" value="AgBase"/>
</dbReference>
<dbReference type="GO" id="GO:0006366">
    <property type="term" value="P:transcription by RNA polymerase II"/>
    <property type="evidence" value="ECO:0000247"/>
    <property type="project" value="AgBase"/>
</dbReference>
<dbReference type="FunFam" id="3.30.160.60:FF:003460">
    <property type="entry name" value="Early growth response protein 1"/>
    <property type="match status" value="1"/>
</dbReference>
<dbReference type="FunFam" id="3.30.160.60:FF:000419">
    <property type="entry name" value="Early growth response protein 4"/>
    <property type="match status" value="1"/>
</dbReference>
<dbReference type="Gene3D" id="3.30.160.60">
    <property type="entry name" value="Classic Zinc Finger"/>
    <property type="match status" value="3"/>
</dbReference>
<dbReference type="InterPro" id="IPR036236">
    <property type="entry name" value="Znf_C2H2_sf"/>
</dbReference>
<dbReference type="InterPro" id="IPR013087">
    <property type="entry name" value="Znf_C2H2_type"/>
</dbReference>
<dbReference type="PANTHER" id="PTHR23235:SF42">
    <property type="entry name" value="EARLY GROWTH RESPONSE PROTEIN 1"/>
    <property type="match status" value="1"/>
</dbReference>
<dbReference type="PANTHER" id="PTHR23235">
    <property type="entry name" value="KRUEPPEL-LIKE TRANSCRIPTION FACTOR"/>
    <property type="match status" value="1"/>
</dbReference>
<dbReference type="Pfam" id="PF00096">
    <property type="entry name" value="zf-C2H2"/>
    <property type="match status" value="2"/>
</dbReference>
<dbReference type="SMART" id="SM00355">
    <property type="entry name" value="ZnF_C2H2"/>
    <property type="match status" value="2"/>
</dbReference>
<dbReference type="SUPFAM" id="SSF57667">
    <property type="entry name" value="beta-beta-alpha zinc fingers"/>
    <property type="match status" value="1"/>
</dbReference>
<dbReference type="PROSITE" id="PS00028">
    <property type="entry name" value="ZINC_FINGER_C2H2_1"/>
    <property type="match status" value="1"/>
</dbReference>
<dbReference type="PROSITE" id="PS50157">
    <property type="entry name" value="ZINC_FINGER_C2H2_2"/>
    <property type="match status" value="2"/>
</dbReference>